<gene>
    <name type="primary">rps-29</name>
    <name type="ORF">17E5.60</name>
    <name type="ORF">NCU03738</name>
</gene>
<name>RS29_NEUCR</name>
<protein>
    <recommendedName>
        <fullName evidence="3">Small ribosomal subunit protein uS14</fullName>
    </recommendedName>
    <alternativeName>
        <fullName>40S ribosomal protein S29</fullName>
    </alternativeName>
</protein>
<proteinExistence type="evidence at protein level"/>
<feature type="chain" id="PRO_0000131030" description="Small ribosomal subunit protein uS14">
    <location>
        <begin position="1"/>
        <end position="56"/>
    </location>
</feature>
<feature type="binding site" evidence="1">
    <location>
        <position position="21"/>
    </location>
    <ligand>
        <name>Zn(2+)</name>
        <dbReference type="ChEBI" id="CHEBI:29105"/>
    </ligand>
</feature>
<feature type="binding site" evidence="1">
    <location>
        <position position="24"/>
    </location>
    <ligand>
        <name>Zn(2+)</name>
        <dbReference type="ChEBI" id="CHEBI:29105"/>
    </ligand>
</feature>
<feature type="binding site" evidence="1">
    <location>
        <position position="39"/>
    </location>
    <ligand>
        <name>Zn(2+)</name>
        <dbReference type="ChEBI" id="CHEBI:29105"/>
    </ligand>
</feature>
<feature type="binding site" evidence="1">
    <location>
        <position position="42"/>
    </location>
    <ligand>
        <name>Zn(2+)</name>
        <dbReference type="ChEBI" id="CHEBI:29105"/>
    </ligand>
</feature>
<accession>Q9C2P2</accession>
<accession>Q7S7X4</accession>
<dbReference type="EMBL" id="AL513467">
    <property type="protein sequence ID" value="CAC28832.1"/>
    <property type="molecule type" value="Genomic_DNA"/>
</dbReference>
<dbReference type="EMBL" id="CM002240">
    <property type="protein sequence ID" value="EAA32278.1"/>
    <property type="molecule type" value="Genomic_DNA"/>
</dbReference>
<dbReference type="RefSeq" id="XP_961514.1">
    <property type="nucleotide sequence ID" value="XM_956421.3"/>
</dbReference>
<dbReference type="PDB" id="7R81">
    <property type="method" value="EM"/>
    <property type="resolution" value="2.70 A"/>
    <property type="chains" value="e2=1-56"/>
</dbReference>
<dbReference type="PDBsum" id="7R81"/>
<dbReference type="EMDB" id="EMD-24307"/>
<dbReference type="SMR" id="Q9C2P2"/>
<dbReference type="FunCoup" id="Q9C2P2">
    <property type="interactions" value="707"/>
</dbReference>
<dbReference type="STRING" id="367110.Q9C2P2"/>
<dbReference type="PaxDb" id="5141-EFNCRP00000003496"/>
<dbReference type="EnsemblFungi" id="EAA32278">
    <property type="protein sequence ID" value="EAA32278"/>
    <property type="gene ID" value="NCU03738"/>
</dbReference>
<dbReference type="GeneID" id="3877589"/>
<dbReference type="KEGG" id="ncr:NCU03738"/>
<dbReference type="VEuPathDB" id="FungiDB:NCU03738"/>
<dbReference type="HOGENOM" id="CLU_177289_1_1_1"/>
<dbReference type="InParanoid" id="Q9C2P2"/>
<dbReference type="OMA" id="HCFREIA"/>
<dbReference type="OrthoDB" id="10252683at2759"/>
<dbReference type="Proteomes" id="UP000001805">
    <property type="component" value="Chromosome 2, Linkage Group V"/>
</dbReference>
<dbReference type="GO" id="GO:0022627">
    <property type="term" value="C:cytosolic small ribosomal subunit"/>
    <property type="evidence" value="ECO:0000318"/>
    <property type="project" value="GO_Central"/>
</dbReference>
<dbReference type="GO" id="GO:0003735">
    <property type="term" value="F:structural constituent of ribosome"/>
    <property type="evidence" value="ECO:0000318"/>
    <property type="project" value="GO_Central"/>
</dbReference>
<dbReference type="GO" id="GO:0008270">
    <property type="term" value="F:zinc ion binding"/>
    <property type="evidence" value="ECO:0000318"/>
    <property type="project" value="GO_Central"/>
</dbReference>
<dbReference type="GO" id="GO:0002181">
    <property type="term" value="P:cytoplasmic translation"/>
    <property type="evidence" value="ECO:0000318"/>
    <property type="project" value="GO_Central"/>
</dbReference>
<dbReference type="FunFam" id="4.10.830.10:FF:000002">
    <property type="entry name" value="40S ribosomal protein S29"/>
    <property type="match status" value="1"/>
</dbReference>
<dbReference type="Gene3D" id="4.10.830.10">
    <property type="entry name" value="30s Ribosomal Protein S14, Chain N"/>
    <property type="match status" value="1"/>
</dbReference>
<dbReference type="InterPro" id="IPR001209">
    <property type="entry name" value="Ribosomal_uS14"/>
</dbReference>
<dbReference type="InterPro" id="IPR018271">
    <property type="entry name" value="Ribosomal_uS14_CS"/>
</dbReference>
<dbReference type="InterPro" id="IPR039744">
    <property type="entry name" value="RIbosomal_uS14_euk_arc"/>
</dbReference>
<dbReference type="InterPro" id="IPR043140">
    <property type="entry name" value="Ribosomal_uS14_sf"/>
</dbReference>
<dbReference type="NCBIfam" id="NF004424">
    <property type="entry name" value="PRK05766.1"/>
    <property type="match status" value="1"/>
</dbReference>
<dbReference type="PANTHER" id="PTHR12010">
    <property type="entry name" value="40S RIBOSOMAL PROTEIN S29"/>
    <property type="match status" value="1"/>
</dbReference>
<dbReference type="PANTHER" id="PTHR12010:SF2">
    <property type="entry name" value="40S RIBOSOMAL PROTEIN S29"/>
    <property type="match status" value="1"/>
</dbReference>
<dbReference type="Pfam" id="PF00253">
    <property type="entry name" value="Ribosomal_S14"/>
    <property type="match status" value="1"/>
</dbReference>
<dbReference type="PROSITE" id="PS00527">
    <property type="entry name" value="RIBOSOMAL_S14"/>
    <property type="match status" value="1"/>
</dbReference>
<keyword id="KW-0002">3D-structure</keyword>
<keyword id="KW-0963">Cytoplasm</keyword>
<keyword id="KW-0479">Metal-binding</keyword>
<keyword id="KW-1185">Reference proteome</keyword>
<keyword id="KW-0687">Ribonucleoprotein</keyword>
<keyword id="KW-0689">Ribosomal protein</keyword>
<keyword id="KW-0862">Zinc</keyword>
<reference key="1">
    <citation type="journal article" date="2003" name="Nucleic Acids Res.">
        <title>What's in the genome of a filamentous fungus? Analysis of the Neurospora genome sequence.</title>
        <authorList>
            <person name="Mannhaupt G."/>
            <person name="Montrone C."/>
            <person name="Haase D."/>
            <person name="Mewes H.-W."/>
            <person name="Aign V."/>
            <person name="Hoheisel J.D."/>
            <person name="Fartmann B."/>
            <person name="Nyakatura G."/>
            <person name="Kempken F."/>
            <person name="Maier J."/>
            <person name="Schulte U."/>
        </authorList>
    </citation>
    <scope>NUCLEOTIDE SEQUENCE [LARGE SCALE GENOMIC DNA]</scope>
    <source>
        <strain>ATCC 24698 / 74-OR23-1A / CBS 708.71 / DSM 1257 / FGSC 987</strain>
    </source>
</reference>
<reference key="2">
    <citation type="journal article" date="2003" name="Nature">
        <title>The genome sequence of the filamentous fungus Neurospora crassa.</title>
        <authorList>
            <person name="Galagan J.E."/>
            <person name="Calvo S.E."/>
            <person name="Borkovich K.A."/>
            <person name="Selker E.U."/>
            <person name="Read N.D."/>
            <person name="Jaffe D.B."/>
            <person name="FitzHugh W."/>
            <person name="Ma L.-J."/>
            <person name="Smirnov S."/>
            <person name="Purcell S."/>
            <person name="Rehman B."/>
            <person name="Elkins T."/>
            <person name="Engels R."/>
            <person name="Wang S."/>
            <person name="Nielsen C.B."/>
            <person name="Butler J."/>
            <person name="Endrizzi M."/>
            <person name="Qui D."/>
            <person name="Ianakiev P."/>
            <person name="Bell-Pedersen D."/>
            <person name="Nelson M.A."/>
            <person name="Werner-Washburne M."/>
            <person name="Selitrennikoff C.P."/>
            <person name="Kinsey J.A."/>
            <person name="Braun E.L."/>
            <person name="Zelter A."/>
            <person name="Schulte U."/>
            <person name="Kothe G.O."/>
            <person name="Jedd G."/>
            <person name="Mewes H.-W."/>
            <person name="Staben C."/>
            <person name="Marcotte E."/>
            <person name="Greenberg D."/>
            <person name="Roy A."/>
            <person name="Foley K."/>
            <person name="Naylor J."/>
            <person name="Stange-Thomann N."/>
            <person name="Barrett R."/>
            <person name="Gnerre S."/>
            <person name="Kamal M."/>
            <person name="Kamvysselis M."/>
            <person name="Mauceli E.W."/>
            <person name="Bielke C."/>
            <person name="Rudd S."/>
            <person name="Frishman D."/>
            <person name="Krystofova S."/>
            <person name="Rasmussen C."/>
            <person name="Metzenberg R.L."/>
            <person name="Perkins D.D."/>
            <person name="Kroken S."/>
            <person name="Cogoni C."/>
            <person name="Macino G."/>
            <person name="Catcheside D.E.A."/>
            <person name="Li W."/>
            <person name="Pratt R.J."/>
            <person name="Osmani S.A."/>
            <person name="DeSouza C.P.C."/>
            <person name="Glass N.L."/>
            <person name="Orbach M.J."/>
            <person name="Berglund J.A."/>
            <person name="Voelker R."/>
            <person name="Yarden O."/>
            <person name="Plamann M."/>
            <person name="Seiler S."/>
            <person name="Dunlap J.C."/>
            <person name="Radford A."/>
            <person name="Aramayo R."/>
            <person name="Natvig D.O."/>
            <person name="Alex L.A."/>
            <person name="Mannhaupt G."/>
            <person name="Ebbole D.J."/>
            <person name="Freitag M."/>
            <person name="Paulsen I."/>
            <person name="Sachs M.S."/>
            <person name="Lander E.S."/>
            <person name="Nusbaum C."/>
            <person name="Birren B.W."/>
        </authorList>
    </citation>
    <scope>NUCLEOTIDE SEQUENCE [LARGE SCALE GENOMIC DNA]</scope>
    <source>
        <strain>ATCC 24698 / 74-OR23-1A / CBS 708.71 / DSM 1257 / FGSC 987</strain>
    </source>
</reference>
<reference evidence="6" key="3">
    <citation type="journal article" date="2021" name="Proc. Natl. Acad. Sci. U.S.A.">
        <title>Structure of the translating Neurospora ribosome arrested by cycloheximide.</title>
        <authorList>
            <person name="Shen L."/>
            <person name="Su Z."/>
            <person name="Yang K."/>
            <person name="Wu C."/>
            <person name="Becker T."/>
            <person name="Bell-Pedersen D."/>
            <person name="Zhang J."/>
            <person name="Sachs M.S."/>
        </authorList>
    </citation>
    <scope>STRUCTURE BY ELECTRON MICROSCOPY (2.70 ANGSTROMS)</scope>
</reference>
<sequence length="56" mass="6500">MSHESVWNSRPRTYGKGSRSCRVCTHSAGLIRKYGLNICRQCFREKANDIGFTKHR</sequence>
<comment type="function">
    <text evidence="5">Component of the ribosome, a large ribonucleoprotein complex responsible for the synthesis of proteins in the cell. The small ribosomal subunit (SSU) binds messenger RNAs (mRNAs) and translates the encoded message by selecting cognate aminoacyl-transfer RNA (tRNA) molecules. The large subunit (LSU) contains the ribosomal catalytic site termed the peptidyl transferase center (PTC), which catalyzes the formation of peptide bonds, thereby polymerizing the amino acids delivered by tRNAs into a polypeptide chain. The nascent polypeptides leave the ribosome through a tunnel in the LSU and interact with protein factors that function in enzymatic processing, targeting, and the membrane insertion of nascent chains at the exit of the ribosomal tunnel.</text>
</comment>
<comment type="cofactor">
    <cofactor evidence="4">
        <name>Zn(2+)</name>
        <dbReference type="ChEBI" id="CHEBI:29105"/>
    </cofactor>
    <text evidence="4">Binds 1 zinc ion per subunit.</text>
</comment>
<comment type="subunit">
    <text evidence="2">Component of the small ribosomal subunit (SSU). Mature N.crassa ribosomes consist of a small (40S) and a large (60S) subunit. The 40S small subunit contains 1 molecule of ribosomal RNA (18S rRNA) and at least 32 different proteins. The large 60S subunit contains 3 rRNA molecules (26S, 5.8S and 5S rRNA) and at least 42 different proteins.</text>
</comment>
<comment type="subcellular location">
    <subcellularLocation>
        <location evidence="2">Cytoplasm</location>
    </subcellularLocation>
</comment>
<comment type="similarity">
    <text evidence="4">Belongs to the universal ribosomal protein uS14 family.</text>
</comment>
<evidence type="ECO:0000255" key="1"/>
<evidence type="ECO:0000269" key="2">
    <source>
    </source>
</evidence>
<evidence type="ECO:0000303" key="3">
    <source>
    </source>
</evidence>
<evidence type="ECO:0000305" key="4"/>
<evidence type="ECO:0000305" key="5">
    <source>
    </source>
</evidence>
<evidence type="ECO:0007744" key="6">
    <source>
        <dbReference type="PDB" id="7R81"/>
    </source>
</evidence>
<organism>
    <name type="scientific">Neurospora crassa (strain ATCC 24698 / 74-OR23-1A / CBS 708.71 / DSM 1257 / FGSC 987)</name>
    <dbReference type="NCBI Taxonomy" id="367110"/>
    <lineage>
        <taxon>Eukaryota</taxon>
        <taxon>Fungi</taxon>
        <taxon>Dikarya</taxon>
        <taxon>Ascomycota</taxon>
        <taxon>Pezizomycotina</taxon>
        <taxon>Sordariomycetes</taxon>
        <taxon>Sordariomycetidae</taxon>
        <taxon>Sordariales</taxon>
        <taxon>Sordariaceae</taxon>
        <taxon>Neurospora</taxon>
    </lineage>
</organism>